<feature type="chain" id="PRO_0000388662" description="Putative mediator of RNA polymerase II transcription subunit 28">
    <location>
        <begin position="1"/>
        <end position="179"/>
    </location>
</feature>
<feature type="coiled-coil region" evidence="2">
    <location>
        <begin position="81"/>
        <end position="119"/>
    </location>
</feature>
<proteinExistence type="inferred from homology"/>
<reference key="1">
    <citation type="journal article" date="2005" name="Nature">
        <title>The genome of the social amoeba Dictyostelium discoideum.</title>
        <authorList>
            <person name="Eichinger L."/>
            <person name="Pachebat J.A."/>
            <person name="Gloeckner G."/>
            <person name="Rajandream M.A."/>
            <person name="Sucgang R."/>
            <person name="Berriman M."/>
            <person name="Song J."/>
            <person name="Olsen R."/>
            <person name="Szafranski K."/>
            <person name="Xu Q."/>
            <person name="Tunggal B."/>
            <person name="Kummerfeld S."/>
            <person name="Madera M."/>
            <person name="Konfortov B.A."/>
            <person name="Rivero F."/>
            <person name="Bankier A.T."/>
            <person name="Lehmann R."/>
            <person name="Hamlin N."/>
            <person name="Davies R."/>
            <person name="Gaudet P."/>
            <person name="Fey P."/>
            <person name="Pilcher K."/>
            <person name="Chen G."/>
            <person name="Saunders D."/>
            <person name="Sodergren E.J."/>
            <person name="Davis P."/>
            <person name="Kerhornou A."/>
            <person name="Nie X."/>
            <person name="Hall N."/>
            <person name="Anjard C."/>
            <person name="Hemphill L."/>
            <person name="Bason N."/>
            <person name="Farbrother P."/>
            <person name="Desany B."/>
            <person name="Just E."/>
            <person name="Morio T."/>
            <person name="Rost R."/>
            <person name="Churcher C.M."/>
            <person name="Cooper J."/>
            <person name="Haydock S."/>
            <person name="van Driessche N."/>
            <person name="Cronin A."/>
            <person name="Goodhead I."/>
            <person name="Muzny D.M."/>
            <person name="Mourier T."/>
            <person name="Pain A."/>
            <person name="Lu M."/>
            <person name="Harper D."/>
            <person name="Lindsay R."/>
            <person name="Hauser H."/>
            <person name="James K.D."/>
            <person name="Quiles M."/>
            <person name="Madan Babu M."/>
            <person name="Saito T."/>
            <person name="Buchrieser C."/>
            <person name="Wardroper A."/>
            <person name="Felder M."/>
            <person name="Thangavelu M."/>
            <person name="Johnson D."/>
            <person name="Knights A."/>
            <person name="Loulseged H."/>
            <person name="Mungall K.L."/>
            <person name="Oliver K."/>
            <person name="Price C."/>
            <person name="Quail M.A."/>
            <person name="Urushihara H."/>
            <person name="Hernandez J."/>
            <person name="Rabbinowitsch E."/>
            <person name="Steffen D."/>
            <person name="Sanders M."/>
            <person name="Ma J."/>
            <person name="Kohara Y."/>
            <person name="Sharp S."/>
            <person name="Simmonds M.N."/>
            <person name="Spiegler S."/>
            <person name="Tivey A."/>
            <person name="Sugano S."/>
            <person name="White B."/>
            <person name="Walker D."/>
            <person name="Woodward J.R."/>
            <person name="Winckler T."/>
            <person name="Tanaka Y."/>
            <person name="Shaulsky G."/>
            <person name="Schleicher M."/>
            <person name="Weinstock G.M."/>
            <person name="Rosenthal A."/>
            <person name="Cox E.C."/>
            <person name="Chisholm R.L."/>
            <person name="Gibbs R.A."/>
            <person name="Loomis W.F."/>
            <person name="Platzer M."/>
            <person name="Kay R.R."/>
            <person name="Williams J.G."/>
            <person name="Dear P.H."/>
            <person name="Noegel A.A."/>
            <person name="Barrell B.G."/>
            <person name="Kuspa A."/>
        </authorList>
    </citation>
    <scope>NUCLEOTIDE SEQUENCE [LARGE SCALE GENOMIC DNA]</scope>
    <source>
        <strain>AX4</strain>
    </source>
</reference>
<organism>
    <name type="scientific">Dictyostelium discoideum</name>
    <name type="common">Social amoeba</name>
    <dbReference type="NCBI Taxonomy" id="44689"/>
    <lineage>
        <taxon>Eukaryota</taxon>
        <taxon>Amoebozoa</taxon>
        <taxon>Evosea</taxon>
        <taxon>Eumycetozoa</taxon>
        <taxon>Dictyostelia</taxon>
        <taxon>Dictyosteliales</taxon>
        <taxon>Dictyosteliaceae</taxon>
        <taxon>Dictyostelium</taxon>
    </lineage>
</organism>
<gene>
    <name type="primary">med28</name>
    <name type="ORF">DDB_G0292324</name>
</gene>
<evidence type="ECO:0000250" key="1"/>
<evidence type="ECO:0000255" key="2"/>
<evidence type="ECO:0000305" key="3"/>
<comment type="function">
    <text evidence="1">Component of the Mediator complex, a coactivator involved in the regulated transcription of nearly all RNA polymerase II-dependent genes. Mediator functions as a bridge to convey information from gene-specific regulatory proteins to the basal RNA polymerase II transcription machinery. Mediator is recruited to promoters by direct interactions with regulatory proteins and serves as a scaffold for the assembly of a functional preinitiation complex with RNA polymerase II and the general transcription factors (By similarity).</text>
</comment>
<comment type="subunit">
    <text evidence="1">Component of the Mediator complex.</text>
</comment>
<comment type="subcellular location">
    <subcellularLocation>
        <location evidence="3">Nucleus</location>
    </subcellularLocation>
</comment>
<comment type="similarity">
    <text evidence="3">Belongs to the Mediator complex subunit 28 family.</text>
</comment>
<accession>Q54DD4</accession>
<protein>
    <recommendedName>
        <fullName>Putative mediator of RNA polymerase II transcription subunit 28</fullName>
    </recommendedName>
    <alternativeName>
        <fullName>Putative mediator complex subunit 28</fullName>
    </alternativeName>
</protein>
<sequence>MDTNNTNNINSLENPIDLENDPNILFTELNVKLESLITFLTKNDKDNQIFVDEIIDNKVTDLLIASKELENYFISQQSKYSAEKNKIQLKQEIYKVKKEIENKDRLIERYKNKVKEWKYHFEPLYQSQNHILHSTAQGLSGIENQFSPVFTPMPNTPSILQNLSQAKPSPSLGLGSTIL</sequence>
<keyword id="KW-0010">Activator</keyword>
<keyword id="KW-0175">Coiled coil</keyword>
<keyword id="KW-0539">Nucleus</keyword>
<keyword id="KW-1185">Reference proteome</keyword>
<keyword id="KW-0804">Transcription</keyword>
<keyword id="KW-0805">Transcription regulation</keyword>
<dbReference type="EMBL" id="AAFI02000189">
    <property type="protein sequence ID" value="EAL61286.1"/>
    <property type="molecule type" value="Genomic_DNA"/>
</dbReference>
<dbReference type="RefSeq" id="XP_629707.1">
    <property type="nucleotide sequence ID" value="XM_629705.1"/>
</dbReference>
<dbReference type="SMR" id="Q54DD4"/>
<dbReference type="FunCoup" id="Q54DD4">
    <property type="interactions" value="97"/>
</dbReference>
<dbReference type="STRING" id="44689.Q54DD4"/>
<dbReference type="PaxDb" id="44689-DDB0266950"/>
<dbReference type="EnsemblProtists" id="EAL61286">
    <property type="protein sequence ID" value="EAL61286"/>
    <property type="gene ID" value="DDB_G0292324"/>
</dbReference>
<dbReference type="GeneID" id="8628621"/>
<dbReference type="KEGG" id="ddi:DDB_G0292324"/>
<dbReference type="dictyBase" id="DDB_G0292324">
    <property type="gene designation" value="med28"/>
</dbReference>
<dbReference type="VEuPathDB" id="AmoebaDB:DDB_G0292324"/>
<dbReference type="eggNOG" id="ENOG502RHH4">
    <property type="taxonomic scope" value="Eukaryota"/>
</dbReference>
<dbReference type="HOGENOM" id="CLU_1506118_0_0_1"/>
<dbReference type="InParanoid" id="Q54DD4"/>
<dbReference type="OMA" id="WKSHFEP"/>
<dbReference type="PhylomeDB" id="Q54DD4"/>
<dbReference type="PRO" id="PR:Q54DD4"/>
<dbReference type="Proteomes" id="UP000002195">
    <property type="component" value="Chromosome 6"/>
</dbReference>
<dbReference type="GO" id="GO:0016592">
    <property type="term" value="C:mediator complex"/>
    <property type="evidence" value="ECO:0000250"/>
    <property type="project" value="dictyBase"/>
</dbReference>
<dbReference type="GO" id="GO:0003712">
    <property type="term" value="F:transcription coregulator activity"/>
    <property type="evidence" value="ECO:0000305"/>
    <property type="project" value="dictyBase"/>
</dbReference>
<dbReference type="GO" id="GO:0006366">
    <property type="term" value="P:transcription by RNA polymerase II"/>
    <property type="evidence" value="ECO:0000305"/>
    <property type="project" value="dictyBase"/>
</dbReference>
<dbReference type="InterPro" id="IPR021640">
    <property type="entry name" value="Mediator_Med28"/>
</dbReference>
<dbReference type="PANTHER" id="PTHR13512">
    <property type="entry name" value="MEDIATOR COMPLEX SUBUNIT 28"/>
    <property type="match status" value="1"/>
</dbReference>
<dbReference type="PANTHER" id="PTHR13512:SF2">
    <property type="entry name" value="MEDIATOR OF RNA POLYMERASE II TRANSCRIPTION SUBUNIT 28"/>
    <property type="match status" value="1"/>
</dbReference>
<dbReference type="Pfam" id="PF11594">
    <property type="entry name" value="Med28"/>
    <property type="match status" value="1"/>
</dbReference>
<name>MED28_DICDI</name>